<organism>
    <name type="scientific">Listeria monocytogenes serotype 4b (strain F2365)</name>
    <dbReference type="NCBI Taxonomy" id="265669"/>
    <lineage>
        <taxon>Bacteria</taxon>
        <taxon>Bacillati</taxon>
        <taxon>Bacillota</taxon>
        <taxon>Bacilli</taxon>
        <taxon>Bacillales</taxon>
        <taxon>Listeriaceae</taxon>
        <taxon>Listeria</taxon>
    </lineage>
</organism>
<protein>
    <recommendedName>
        <fullName evidence="1">Glutamate--tRNA ligase</fullName>
        <ecNumber evidence="1">6.1.1.17</ecNumber>
    </recommendedName>
    <alternativeName>
        <fullName evidence="1">Glutamyl-tRNA synthetase</fullName>
        <shortName evidence="1">GluRS</shortName>
    </alternativeName>
</protein>
<accession>Q724H5</accession>
<proteinExistence type="inferred from homology"/>
<comment type="function">
    <text evidence="1">Catalyzes the attachment of glutamate to tRNA(Glu) in a two-step reaction: glutamate is first activated by ATP to form Glu-AMP and then transferred to the acceptor end of tRNA(Glu).</text>
</comment>
<comment type="catalytic activity">
    <reaction evidence="1">
        <text>tRNA(Glu) + L-glutamate + ATP = L-glutamyl-tRNA(Glu) + AMP + diphosphate</text>
        <dbReference type="Rhea" id="RHEA:23540"/>
        <dbReference type="Rhea" id="RHEA-COMP:9663"/>
        <dbReference type="Rhea" id="RHEA-COMP:9680"/>
        <dbReference type="ChEBI" id="CHEBI:29985"/>
        <dbReference type="ChEBI" id="CHEBI:30616"/>
        <dbReference type="ChEBI" id="CHEBI:33019"/>
        <dbReference type="ChEBI" id="CHEBI:78442"/>
        <dbReference type="ChEBI" id="CHEBI:78520"/>
        <dbReference type="ChEBI" id="CHEBI:456215"/>
        <dbReference type="EC" id="6.1.1.17"/>
    </reaction>
</comment>
<comment type="cofactor">
    <cofactor evidence="1">
        <name>Zn(2+)</name>
        <dbReference type="ChEBI" id="CHEBI:29105"/>
    </cofactor>
    <text evidence="1">Binds 1 zinc ion per subunit.</text>
</comment>
<comment type="subunit">
    <text evidence="1">Monomer.</text>
</comment>
<comment type="subcellular location">
    <subcellularLocation>
        <location evidence="1">Cytoplasm</location>
    </subcellularLocation>
</comment>
<comment type="similarity">
    <text evidence="1">Belongs to the class-I aminoacyl-tRNA synthetase family. Glutamate--tRNA ligase type 1 subfamily.</text>
</comment>
<gene>
    <name evidence="1" type="primary">gltX</name>
    <name type="ordered locus">LMOf2365_0249</name>
</gene>
<keyword id="KW-0030">Aminoacyl-tRNA synthetase</keyword>
<keyword id="KW-0067">ATP-binding</keyword>
<keyword id="KW-0963">Cytoplasm</keyword>
<keyword id="KW-0436">Ligase</keyword>
<keyword id="KW-0479">Metal-binding</keyword>
<keyword id="KW-0547">Nucleotide-binding</keyword>
<keyword id="KW-0648">Protein biosynthesis</keyword>
<keyword id="KW-0862">Zinc</keyword>
<feature type="chain" id="PRO_0000119593" description="Glutamate--tRNA ligase">
    <location>
        <begin position="1"/>
        <end position="491"/>
    </location>
</feature>
<feature type="short sequence motif" description="'HIGH' region" evidence="1">
    <location>
        <begin position="13"/>
        <end position="23"/>
    </location>
</feature>
<feature type="short sequence motif" description="'KMSKS' region" evidence="1">
    <location>
        <begin position="254"/>
        <end position="258"/>
    </location>
</feature>
<feature type="binding site" evidence="1">
    <location>
        <position position="110"/>
    </location>
    <ligand>
        <name>Zn(2+)</name>
        <dbReference type="ChEBI" id="CHEBI:29105"/>
    </ligand>
</feature>
<feature type="binding site" evidence="1">
    <location>
        <position position="112"/>
    </location>
    <ligand>
        <name>Zn(2+)</name>
        <dbReference type="ChEBI" id="CHEBI:29105"/>
    </ligand>
</feature>
<feature type="binding site" evidence="1">
    <location>
        <position position="137"/>
    </location>
    <ligand>
        <name>Zn(2+)</name>
        <dbReference type="ChEBI" id="CHEBI:29105"/>
    </ligand>
</feature>
<feature type="binding site" evidence="1">
    <location>
        <position position="139"/>
    </location>
    <ligand>
        <name>Zn(2+)</name>
        <dbReference type="ChEBI" id="CHEBI:29105"/>
    </ligand>
</feature>
<feature type="binding site" evidence="1">
    <location>
        <position position="257"/>
    </location>
    <ligand>
        <name>ATP</name>
        <dbReference type="ChEBI" id="CHEBI:30616"/>
    </ligand>
</feature>
<sequence length="491" mass="55979">MSETKRVRVRYAPSPTGFLHIGNARTALFNYLFARHNDGDFIIRIEDTDAKRNIADGEESQMTNLKWLGMDWDEGVDVPGKYGPYRQSERQSIYEPLIQQLLDEGLAYKCYCTEEELDAEREKQKANGEMPRYSGKCRHLTKEQQAEKEAQGFKPSIRFKVPANETITFNDMVKDDVSFESNGIGDFVIAKKDGIPTYNFAVAVDDHLMEISHVLRGDDHISNTPKQILIYNAFGWEPPIFGHMTLIVNESRRKLSKRDGSIIQFIEQYRDLGYLPEALFNFIAMLGWSPEGEEEIFSKEEFIKMFDPKRLSKSPALFDNVKLTWVNNQYVKKLPLNDVVELSLPHLQKAGVVSAELDQAELDWVHKLVSLYHEQMSYGAEIVPLSEMFFADAESITFDEEETAVLAEETVPTVISAFKKELEALEVLEAAEVKAAIKRVQKETGVKGKGLFMPIRIVTTGEMHGPELPLAIEVLGREKVLNRLDTWLKNN</sequence>
<name>SYE_LISMF</name>
<reference key="1">
    <citation type="journal article" date="2004" name="Nucleic Acids Res.">
        <title>Whole genome comparisons of serotype 4b and 1/2a strains of the food-borne pathogen Listeria monocytogenes reveal new insights into the core genome components of this species.</title>
        <authorList>
            <person name="Nelson K.E."/>
            <person name="Fouts D.E."/>
            <person name="Mongodin E.F."/>
            <person name="Ravel J."/>
            <person name="DeBoy R.T."/>
            <person name="Kolonay J.F."/>
            <person name="Rasko D.A."/>
            <person name="Angiuoli S.V."/>
            <person name="Gill S.R."/>
            <person name="Paulsen I.T."/>
            <person name="Peterson J.D."/>
            <person name="White O."/>
            <person name="Nelson W.C."/>
            <person name="Nierman W.C."/>
            <person name="Beanan M.J."/>
            <person name="Brinkac L.M."/>
            <person name="Daugherty S.C."/>
            <person name="Dodson R.J."/>
            <person name="Durkin A.S."/>
            <person name="Madupu R."/>
            <person name="Haft D.H."/>
            <person name="Selengut J."/>
            <person name="Van Aken S.E."/>
            <person name="Khouri H.M."/>
            <person name="Fedorova N."/>
            <person name="Forberger H.A."/>
            <person name="Tran B."/>
            <person name="Kathariou S."/>
            <person name="Wonderling L.D."/>
            <person name="Uhlich G.A."/>
            <person name="Bayles D.O."/>
            <person name="Luchansky J.B."/>
            <person name="Fraser C.M."/>
        </authorList>
    </citation>
    <scope>NUCLEOTIDE SEQUENCE [LARGE SCALE GENOMIC DNA]</scope>
    <source>
        <strain>F2365</strain>
    </source>
</reference>
<evidence type="ECO:0000255" key="1">
    <source>
        <dbReference type="HAMAP-Rule" id="MF_00022"/>
    </source>
</evidence>
<dbReference type="EC" id="6.1.1.17" evidence="1"/>
<dbReference type="EMBL" id="AE017262">
    <property type="protein sequence ID" value="AAT03036.1"/>
    <property type="molecule type" value="Genomic_DNA"/>
</dbReference>
<dbReference type="RefSeq" id="WP_003728082.1">
    <property type="nucleotide sequence ID" value="NC_002973.6"/>
</dbReference>
<dbReference type="SMR" id="Q724H5"/>
<dbReference type="KEGG" id="lmf:LMOf2365_0249"/>
<dbReference type="HOGENOM" id="CLU_015768_6_1_9"/>
<dbReference type="GO" id="GO:0005829">
    <property type="term" value="C:cytosol"/>
    <property type="evidence" value="ECO:0007669"/>
    <property type="project" value="TreeGrafter"/>
</dbReference>
<dbReference type="GO" id="GO:0005524">
    <property type="term" value="F:ATP binding"/>
    <property type="evidence" value="ECO:0007669"/>
    <property type="project" value="UniProtKB-UniRule"/>
</dbReference>
<dbReference type="GO" id="GO:0004818">
    <property type="term" value="F:glutamate-tRNA ligase activity"/>
    <property type="evidence" value="ECO:0007669"/>
    <property type="project" value="UniProtKB-UniRule"/>
</dbReference>
<dbReference type="GO" id="GO:0000049">
    <property type="term" value="F:tRNA binding"/>
    <property type="evidence" value="ECO:0007669"/>
    <property type="project" value="InterPro"/>
</dbReference>
<dbReference type="GO" id="GO:0008270">
    <property type="term" value="F:zinc ion binding"/>
    <property type="evidence" value="ECO:0007669"/>
    <property type="project" value="UniProtKB-UniRule"/>
</dbReference>
<dbReference type="GO" id="GO:0006424">
    <property type="term" value="P:glutamyl-tRNA aminoacylation"/>
    <property type="evidence" value="ECO:0007669"/>
    <property type="project" value="UniProtKB-UniRule"/>
</dbReference>
<dbReference type="CDD" id="cd00808">
    <property type="entry name" value="GluRS_core"/>
    <property type="match status" value="1"/>
</dbReference>
<dbReference type="FunFam" id="1.10.10.350:FF:000002">
    <property type="entry name" value="Glutamate--tRNA ligase"/>
    <property type="match status" value="1"/>
</dbReference>
<dbReference type="FunFam" id="3.40.50.620:FF:000007">
    <property type="entry name" value="Glutamate--tRNA ligase"/>
    <property type="match status" value="1"/>
</dbReference>
<dbReference type="Gene3D" id="1.10.10.350">
    <property type="match status" value="1"/>
</dbReference>
<dbReference type="Gene3D" id="3.40.50.620">
    <property type="entry name" value="HUPs"/>
    <property type="match status" value="1"/>
</dbReference>
<dbReference type="HAMAP" id="MF_00022">
    <property type="entry name" value="Glu_tRNA_synth_type1"/>
    <property type="match status" value="1"/>
</dbReference>
<dbReference type="InterPro" id="IPR045462">
    <property type="entry name" value="aa-tRNA-synth_I_cd-bd"/>
</dbReference>
<dbReference type="InterPro" id="IPR020751">
    <property type="entry name" value="aa-tRNA-synth_I_codon-bd_sub2"/>
</dbReference>
<dbReference type="InterPro" id="IPR001412">
    <property type="entry name" value="aa-tRNA-synth_I_CS"/>
</dbReference>
<dbReference type="InterPro" id="IPR008925">
    <property type="entry name" value="aa_tRNA-synth_I_cd-bd_sf"/>
</dbReference>
<dbReference type="InterPro" id="IPR004527">
    <property type="entry name" value="Glu-tRNA-ligase_bac/mito"/>
</dbReference>
<dbReference type="InterPro" id="IPR000924">
    <property type="entry name" value="Glu/Gln-tRNA-synth"/>
</dbReference>
<dbReference type="InterPro" id="IPR020058">
    <property type="entry name" value="Glu/Gln-tRNA-synth_Ib_cat-dom"/>
</dbReference>
<dbReference type="InterPro" id="IPR049940">
    <property type="entry name" value="GluQ/Sye"/>
</dbReference>
<dbReference type="InterPro" id="IPR033910">
    <property type="entry name" value="GluRS_core"/>
</dbReference>
<dbReference type="InterPro" id="IPR014729">
    <property type="entry name" value="Rossmann-like_a/b/a_fold"/>
</dbReference>
<dbReference type="NCBIfam" id="TIGR00464">
    <property type="entry name" value="gltX_bact"/>
    <property type="match status" value="1"/>
</dbReference>
<dbReference type="PANTHER" id="PTHR43311">
    <property type="entry name" value="GLUTAMATE--TRNA LIGASE"/>
    <property type="match status" value="1"/>
</dbReference>
<dbReference type="PANTHER" id="PTHR43311:SF2">
    <property type="entry name" value="GLUTAMATE--TRNA LIGASE, MITOCHONDRIAL-RELATED"/>
    <property type="match status" value="1"/>
</dbReference>
<dbReference type="Pfam" id="PF19269">
    <property type="entry name" value="Anticodon_2"/>
    <property type="match status" value="1"/>
</dbReference>
<dbReference type="Pfam" id="PF00749">
    <property type="entry name" value="tRNA-synt_1c"/>
    <property type="match status" value="1"/>
</dbReference>
<dbReference type="PRINTS" id="PR00987">
    <property type="entry name" value="TRNASYNTHGLU"/>
</dbReference>
<dbReference type="SUPFAM" id="SSF48163">
    <property type="entry name" value="An anticodon-binding domain of class I aminoacyl-tRNA synthetases"/>
    <property type="match status" value="1"/>
</dbReference>
<dbReference type="SUPFAM" id="SSF52374">
    <property type="entry name" value="Nucleotidylyl transferase"/>
    <property type="match status" value="1"/>
</dbReference>
<dbReference type="PROSITE" id="PS00178">
    <property type="entry name" value="AA_TRNA_LIGASE_I"/>
    <property type="match status" value="1"/>
</dbReference>